<keyword id="KW-0028">Amino-acid biosynthesis</keyword>
<keyword id="KW-0057">Aromatic amino acid biosynthesis</keyword>
<keyword id="KW-0456">Lyase</keyword>
<keyword id="KW-1185">Reference proteome</keyword>
<keyword id="KW-0822">Tryptophan biosynthesis</keyword>
<proteinExistence type="inferred from homology"/>
<evidence type="ECO:0000255" key="1">
    <source>
        <dbReference type="HAMAP-Rule" id="MF_00131"/>
    </source>
</evidence>
<feature type="chain" id="PRO_1000198715" description="Tryptophan synthase alpha chain">
    <location>
        <begin position="1"/>
        <end position="264"/>
    </location>
</feature>
<feature type="active site" description="Proton acceptor" evidence="1">
    <location>
        <position position="49"/>
    </location>
</feature>
<feature type="active site" description="Proton acceptor" evidence="1">
    <location>
        <position position="60"/>
    </location>
</feature>
<sequence length="264" mass="27508">MNRIDERLAALKAAGRKALIPFITAGDPEPDMTVSLMHALVRGGADVIELGIPFSDPMADGPVIQRASERALARGMTLARVLEMVAGFRRTDPDTPVVLMGYLNPVEAMGYAAFASAARAAGVDGVLTVDCPPEESDEYAQVLQSHGLATVFLVAPTTPAARLAAVARLARGYVYYVSIKGVTGAATLDVADVARQVGALREHLSLPVGVGFGIRDAETARAIGEVADAVVIGSRLVQEIEAAGAQAPDRLQALLAGIRQALDA</sequence>
<dbReference type="EC" id="4.2.1.20" evidence="1"/>
<dbReference type="EMBL" id="CP001154">
    <property type="protein sequence ID" value="ACO74242.1"/>
    <property type="molecule type" value="Genomic_DNA"/>
</dbReference>
<dbReference type="RefSeq" id="WP_012696729.1">
    <property type="nucleotide sequence ID" value="NC_012559.1"/>
</dbReference>
<dbReference type="SMR" id="C1D702"/>
<dbReference type="STRING" id="557598.LHK_01252"/>
<dbReference type="KEGG" id="lhk:LHK_01252"/>
<dbReference type="eggNOG" id="COG0159">
    <property type="taxonomic scope" value="Bacteria"/>
</dbReference>
<dbReference type="HOGENOM" id="CLU_016734_0_0_4"/>
<dbReference type="UniPathway" id="UPA00035">
    <property type="reaction ID" value="UER00044"/>
</dbReference>
<dbReference type="Proteomes" id="UP000002010">
    <property type="component" value="Chromosome"/>
</dbReference>
<dbReference type="GO" id="GO:0005829">
    <property type="term" value="C:cytosol"/>
    <property type="evidence" value="ECO:0007669"/>
    <property type="project" value="TreeGrafter"/>
</dbReference>
<dbReference type="GO" id="GO:0004834">
    <property type="term" value="F:tryptophan synthase activity"/>
    <property type="evidence" value="ECO:0007669"/>
    <property type="project" value="UniProtKB-UniRule"/>
</dbReference>
<dbReference type="CDD" id="cd04724">
    <property type="entry name" value="Tryptophan_synthase_alpha"/>
    <property type="match status" value="1"/>
</dbReference>
<dbReference type="FunFam" id="3.20.20.70:FF:000037">
    <property type="entry name" value="Tryptophan synthase alpha chain"/>
    <property type="match status" value="1"/>
</dbReference>
<dbReference type="Gene3D" id="3.20.20.70">
    <property type="entry name" value="Aldolase class I"/>
    <property type="match status" value="1"/>
</dbReference>
<dbReference type="HAMAP" id="MF_00131">
    <property type="entry name" value="Trp_synth_alpha"/>
    <property type="match status" value="1"/>
</dbReference>
<dbReference type="InterPro" id="IPR013785">
    <property type="entry name" value="Aldolase_TIM"/>
</dbReference>
<dbReference type="InterPro" id="IPR011060">
    <property type="entry name" value="RibuloseP-bd_barrel"/>
</dbReference>
<dbReference type="InterPro" id="IPR018204">
    <property type="entry name" value="Trp_synthase_alpha_AS"/>
</dbReference>
<dbReference type="InterPro" id="IPR002028">
    <property type="entry name" value="Trp_synthase_suA"/>
</dbReference>
<dbReference type="NCBIfam" id="TIGR00262">
    <property type="entry name" value="trpA"/>
    <property type="match status" value="1"/>
</dbReference>
<dbReference type="PANTHER" id="PTHR43406:SF1">
    <property type="entry name" value="TRYPTOPHAN SYNTHASE ALPHA CHAIN, CHLOROPLASTIC"/>
    <property type="match status" value="1"/>
</dbReference>
<dbReference type="PANTHER" id="PTHR43406">
    <property type="entry name" value="TRYPTOPHAN SYNTHASE, ALPHA CHAIN"/>
    <property type="match status" value="1"/>
</dbReference>
<dbReference type="Pfam" id="PF00290">
    <property type="entry name" value="Trp_syntA"/>
    <property type="match status" value="1"/>
</dbReference>
<dbReference type="SUPFAM" id="SSF51366">
    <property type="entry name" value="Ribulose-phoshate binding barrel"/>
    <property type="match status" value="1"/>
</dbReference>
<dbReference type="PROSITE" id="PS00167">
    <property type="entry name" value="TRP_SYNTHASE_ALPHA"/>
    <property type="match status" value="1"/>
</dbReference>
<organism>
    <name type="scientific">Laribacter hongkongensis (strain HLHK9)</name>
    <dbReference type="NCBI Taxonomy" id="557598"/>
    <lineage>
        <taxon>Bacteria</taxon>
        <taxon>Pseudomonadati</taxon>
        <taxon>Pseudomonadota</taxon>
        <taxon>Betaproteobacteria</taxon>
        <taxon>Neisseriales</taxon>
        <taxon>Aquaspirillaceae</taxon>
        <taxon>Laribacter</taxon>
    </lineage>
</organism>
<name>TRPA_LARHH</name>
<comment type="function">
    <text evidence="1">The alpha subunit is responsible for the aldol cleavage of indoleglycerol phosphate to indole and glyceraldehyde 3-phosphate.</text>
</comment>
<comment type="catalytic activity">
    <reaction evidence="1">
        <text>(1S,2R)-1-C-(indol-3-yl)glycerol 3-phosphate + L-serine = D-glyceraldehyde 3-phosphate + L-tryptophan + H2O</text>
        <dbReference type="Rhea" id="RHEA:10532"/>
        <dbReference type="ChEBI" id="CHEBI:15377"/>
        <dbReference type="ChEBI" id="CHEBI:33384"/>
        <dbReference type="ChEBI" id="CHEBI:57912"/>
        <dbReference type="ChEBI" id="CHEBI:58866"/>
        <dbReference type="ChEBI" id="CHEBI:59776"/>
        <dbReference type="EC" id="4.2.1.20"/>
    </reaction>
</comment>
<comment type="pathway">
    <text evidence="1">Amino-acid biosynthesis; L-tryptophan biosynthesis; L-tryptophan from chorismate: step 5/5.</text>
</comment>
<comment type="subunit">
    <text evidence="1">Tetramer of two alpha and two beta chains.</text>
</comment>
<comment type="similarity">
    <text evidence="1">Belongs to the TrpA family.</text>
</comment>
<reference key="1">
    <citation type="journal article" date="2009" name="PLoS Genet.">
        <title>The complete genome and proteome of Laribacter hongkongensis reveal potential mechanisms for adaptations to different temperatures and habitats.</title>
        <authorList>
            <person name="Woo P.C.Y."/>
            <person name="Lau S.K.P."/>
            <person name="Tse H."/>
            <person name="Teng J.L.L."/>
            <person name="Curreem S.O."/>
            <person name="Tsang A.K.L."/>
            <person name="Fan R.Y.Y."/>
            <person name="Wong G.K.M."/>
            <person name="Huang Y."/>
            <person name="Loman N.J."/>
            <person name="Snyder L.A.S."/>
            <person name="Cai J.J."/>
            <person name="Huang J.-D."/>
            <person name="Mak W."/>
            <person name="Pallen M.J."/>
            <person name="Lok S."/>
            <person name="Yuen K.-Y."/>
        </authorList>
    </citation>
    <scope>NUCLEOTIDE SEQUENCE [LARGE SCALE GENOMIC DNA]</scope>
    <source>
        <strain>HLHK9</strain>
    </source>
</reference>
<accession>C1D702</accession>
<protein>
    <recommendedName>
        <fullName evidence="1">Tryptophan synthase alpha chain</fullName>
        <ecNumber evidence="1">4.2.1.20</ecNumber>
    </recommendedName>
</protein>
<gene>
    <name evidence="1" type="primary">trpA</name>
    <name type="ordered locus">LHK_01252</name>
</gene>